<feature type="chain" id="PRO_1000145331" description="ATP synthase subunit a">
    <location>
        <begin position="1"/>
        <end position="238"/>
    </location>
</feature>
<feature type="transmembrane region" description="Helical" evidence="1">
    <location>
        <begin position="18"/>
        <end position="38"/>
    </location>
</feature>
<feature type="transmembrane region" description="Helical" evidence="1">
    <location>
        <begin position="76"/>
        <end position="96"/>
    </location>
</feature>
<feature type="transmembrane region" description="Helical" evidence="1">
    <location>
        <begin position="114"/>
        <end position="134"/>
    </location>
</feature>
<feature type="transmembrane region" description="Helical" evidence="1">
    <location>
        <begin position="166"/>
        <end position="186"/>
    </location>
</feature>
<feature type="transmembrane region" description="Helical" evidence="1">
    <location>
        <begin position="193"/>
        <end position="213"/>
    </location>
</feature>
<name>ATP6_STRPC</name>
<accession>Q1JMJ4</accession>
<proteinExistence type="inferred from homology"/>
<protein>
    <recommendedName>
        <fullName evidence="1">ATP synthase subunit a</fullName>
    </recommendedName>
    <alternativeName>
        <fullName evidence="1">ATP synthase F0 sector subunit a</fullName>
    </alternativeName>
    <alternativeName>
        <fullName evidence="1">F-ATPase subunit 6</fullName>
    </alternativeName>
</protein>
<sequence length="238" mass="26924">MEEAKIPMLKLGPITFNLTLLAVCIVTIAVIFAFVFWASRQMKLKPEGKQTALEYLISFVDGIGEEHLDHNLQKSYSLLLFTIFLFVAVANNLGLFTKLETVNGYNLWTSPTANLAFDLALSLFITLMVHIEGVRRRGLVAHLKRLATPWPMTPMNLLEEFTNFLSLAIRLFGNIFAGEVVTGLIVQLANYRVYWWPIAFLVNMAWTAFSVFISCIQAFVFTKLTATYLGKKVNESEE</sequence>
<evidence type="ECO:0000255" key="1">
    <source>
        <dbReference type="HAMAP-Rule" id="MF_01393"/>
    </source>
</evidence>
<organism>
    <name type="scientific">Streptococcus pyogenes serotype M12 (strain MGAS9429)</name>
    <dbReference type="NCBI Taxonomy" id="370551"/>
    <lineage>
        <taxon>Bacteria</taxon>
        <taxon>Bacillati</taxon>
        <taxon>Bacillota</taxon>
        <taxon>Bacilli</taxon>
        <taxon>Lactobacillales</taxon>
        <taxon>Streptococcaceae</taxon>
        <taxon>Streptococcus</taxon>
    </lineage>
</organism>
<gene>
    <name evidence="1" type="primary">atpB</name>
    <name type="ordered locus">MGAS9429_Spy0630</name>
</gene>
<comment type="function">
    <text evidence="1">Key component of the proton channel; it plays a direct role in the translocation of protons across the membrane.</text>
</comment>
<comment type="subunit">
    <text evidence="1">F-type ATPases have 2 components, CF(1) - the catalytic core - and CF(0) - the membrane proton channel. CF(1) has five subunits: alpha(3), beta(3), gamma(1), delta(1), epsilon(1). CF(0) has three main subunits: a(1), b(2) and c(9-12). The alpha and beta chains form an alternating ring which encloses part of the gamma chain. CF(1) is attached to CF(0) by a central stalk formed by the gamma and epsilon chains, while a peripheral stalk is formed by the delta and b chains.</text>
</comment>
<comment type="subcellular location">
    <subcellularLocation>
        <location evidence="1">Cell membrane</location>
        <topology evidence="1">Multi-pass membrane protein</topology>
    </subcellularLocation>
</comment>
<comment type="similarity">
    <text evidence="1">Belongs to the ATPase A chain family.</text>
</comment>
<keyword id="KW-0066">ATP synthesis</keyword>
<keyword id="KW-1003">Cell membrane</keyword>
<keyword id="KW-0138">CF(0)</keyword>
<keyword id="KW-0375">Hydrogen ion transport</keyword>
<keyword id="KW-0406">Ion transport</keyword>
<keyword id="KW-0472">Membrane</keyword>
<keyword id="KW-0812">Transmembrane</keyword>
<keyword id="KW-1133">Transmembrane helix</keyword>
<keyword id="KW-0813">Transport</keyword>
<reference key="1">
    <citation type="journal article" date="2006" name="Proc. Natl. Acad. Sci. U.S.A.">
        <title>Molecular genetic anatomy of inter- and intraserotype variation in the human bacterial pathogen group A Streptococcus.</title>
        <authorList>
            <person name="Beres S.B."/>
            <person name="Richter E.W."/>
            <person name="Nagiec M.J."/>
            <person name="Sumby P."/>
            <person name="Porcella S.F."/>
            <person name="DeLeo F.R."/>
            <person name="Musser J.M."/>
        </authorList>
    </citation>
    <scope>NUCLEOTIDE SEQUENCE [LARGE SCALE GENOMIC DNA]</scope>
    <source>
        <strain>MGAS9429</strain>
    </source>
</reference>
<dbReference type="EMBL" id="CP000259">
    <property type="protein sequence ID" value="ABF31818.1"/>
    <property type="molecule type" value="Genomic_DNA"/>
</dbReference>
<dbReference type="RefSeq" id="WP_002985244.1">
    <property type="nucleotide sequence ID" value="NC_008021.1"/>
</dbReference>
<dbReference type="SMR" id="Q1JMJ4"/>
<dbReference type="GeneID" id="69901119"/>
<dbReference type="KEGG" id="spk:MGAS9429_Spy0630"/>
<dbReference type="HOGENOM" id="CLU_041018_2_3_9"/>
<dbReference type="Proteomes" id="UP000002433">
    <property type="component" value="Chromosome"/>
</dbReference>
<dbReference type="GO" id="GO:0005886">
    <property type="term" value="C:plasma membrane"/>
    <property type="evidence" value="ECO:0007669"/>
    <property type="project" value="UniProtKB-SubCell"/>
</dbReference>
<dbReference type="GO" id="GO:0045259">
    <property type="term" value="C:proton-transporting ATP synthase complex"/>
    <property type="evidence" value="ECO:0007669"/>
    <property type="project" value="UniProtKB-KW"/>
</dbReference>
<dbReference type="GO" id="GO:0046933">
    <property type="term" value="F:proton-transporting ATP synthase activity, rotational mechanism"/>
    <property type="evidence" value="ECO:0007669"/>
    <property type="project" value="UniProtKB-UniRule"/>
</dbReference>
<dbReference type="GO" id="GO:0042777">
    <property type="term" value="P:proton motive force-driven plasma membrane ATP synthesis"/>
    <property type="evidence" value="ECO:0007669"/>
    <property type="project" value="TreeGrafter"/>
</dbReference>
<dbReference type="CDD" id="cd00310">
    <property type="entry name" value="ATP-synt_Fo_a_6"/>
    <property type="match status" value="1"/>
</dbReference>
<dbReference type="Gene3D" id="1.20.120.220">
    <property type="entry name" value="ATP synthase, F0 complex, subunit A"/>
    <property type="match status" value="1"/>
</dbReference>
<dbReference type="HAMAP" id="MF_01393">
    <property type="entry name" value="ATP_synth_a_bact"/>
    <property type="match status" value="1"/>
</dbReference>
<dbReference type="InterPro" id="IPR045082">
    <property type="entry name" value="ATP_syn_F0_a_bact/chloroplast"/>
</dbReference>
<dbReference type="InterPro" id="IPR000568">
    <property type="entry name" value="ATP_synth_F0_asu"/>
</dbReference>
<dbReference type="InterPro" id="IPR023011">
    <property type="entry name" value="ATP_synth_F0_asu_AS"/>
</dbReference>
<dbReference type="InterPro" id="IPR035908">
    <property type="entry name" value="F0_ATP_A_sf"/>
</dbReference>
<dbReference type="NCBIfam" id="TIGR01131">
    <property type="entry name" value="ATP_synt_6_or_A"/>
    <property type="match status" value="1"/>
</dbReference>
<dbReference type="NCBIfam" id="NF004479">
    <property type="entry name" value="PRK05815.1-4"/>
    <property type="match status" value="1"/>
</dbReference>
<dbReference type="PANTHER" id="PTHR42823">
    <property type="entry name" value="ATP SYNTHASE SUBUNIT A, CHLOROPLASTIC"/>
    <property type="match status" value="1"/>
</dbReference>
<dbReference type="PANTHER" id="PTHR42823:SF3">
    <property type="entry name" value="ATP SYNTHASE SUBUNIT A, CHLOROPLASTIC"/>
    <property type="match status" value="1"/>
</dbReference>
<dbReference type="Pfam" id="PF00119">
    <property type="entry name" value="ATP-synt_A"/>
    <property type="match status" value="1"/>
</dbReference>
<dbReference type="PRINTS" id="PR00123">
    <property type="entry name" value="ATPASEA"/>
</dbReference>
<dbReference type="SUPFAM" id="SSF81336">
    <property type="entry name" value="F1F0 ATP synthase subunit A"/>
    <property type="match status" value="1"/>
</dbReference>
<dbReference type="PROSITE" id="PS00449">
    <property type="entry name" value="ATPASE_A"/>
    <property type="match status" value="1"/>
</dbReference>